<evidence type="ECO:0000250" key="1">
    <source>
        <dbReference type="UniProtKB" id="Q8WW59"/>
    </source>
</evidence>
<evidence type="ECO:0000250" key="2">
    <source>
        <dbReference type="UniProtKB" id="Q91WK1"/>
    </source>
</evidence>
<evidence type="ECO:0000255" key="3">
    <source>
        <dbReference type="PROSITE-ProRule" id="PRU00548"/>
    </source>
</evidence>
<organism>
    <name type="scientific">Rattus norvegicus</name>
    <name type="common">Rat</name>
    <dbReference type="NCBI Taxonomy" id="10116"/>
    <lineage>
        <taxon>Eukaryota</taxon>
        <taxon>Metazoa</taxon>
        <taxon>Chordata</taxon>
        <taxon>Craniata</taxon>
        <taxon>Vertebrata</taxon>
        <taxon>Euteleostomi</taxon>
        <taxon>Mammalia</taxon>
        <taxon>Eutheria</taxon>
        <taxon>Euarchontoglires</taxon>
        <taxon>Glires</taxon>
        <taxon>Rodentia</taxon>
        <taxon>Myomorpha</taxon>
        <taxon>Muroidea</taxon>
        <taxon>Muridae</taxon>
        <taxon>Murinae</taxon>
        <taxon>Rattus</taxon>
    </lineage>
</organism>
<accession>Q4FZT8</accession>
<keyword id="KW-0007">Acetylation</keyword>
<keyword id="KW-1185">Reference proteome</keyword>
<sequence>MALPFARCWNLYRWGTKRWGVTAGESRRGISFKLEEKTAHSSLALFRGDTGVKYGLVGLEPTKVALNLERFRDWAVVLADTTVTSGRHYWEVTVKRSQQFRIGVADVDMSRDSCVGADDRSWVFSYAQRKWHSMLANEKAPIKGIGQPEKVGLLLDYEAKKLSLVDVNRISVIHTLQTDFRGPVAPAFALWDGELLTHSGLEVPKGL</sequence>
<proteinExistence type="evidence at transcript level"/>
<gene>
    <name type="primary">Spryd4</name>
</gene>
<reference key="1">
    <citation type="journal article" date="2004" name="Genome Res.">
        <title>The status, quality, and expansion of the NIH full-length cDNA project: the Mammalian Gene Collection (MGC).</title>
        <authorList>
            <consortium name="The MGC Project Team"/>
        </authorList>
    </citation>
    <scope>NUCLEOTIDE SEQUENCE [LARGE SCALE MRNA]</scope>
    <source>
        <tissue>Testis</tissue>
    </source>
</reference>
<name>SPRY4_RAT</name>
<dbReference type="EMBL" id="BC099138">
    <property type="protein sequence ID" value="AAH99138.1"/>
    <property type="molecule type" value="mRNA"/>
</dbReference>
<dbReference type="RefSeq" id="NP_001032854.1">
    <property type="nucleotide sequence ID" value="NM_001037765.1"/>
</dbReference>
<dbReference type="RefSeq" id="XP_006240808.1">
    <property type="nucleotide sequence ID" value="XM_006240746.3"/>
</dbReference>
<dbReference type="SMR" id="Q4FZT8"/>
<dbReference type="FunCoup" id="Q4FZT8">
    <property type="interactions" value="1439"/>
</dbReference>
<dbReference type="STRING" id="10116.ENSRNOP00000004173"/>
<dbReference type="iPTMnet" id="Q4FZT8"/>
<dbReference type="PhosphoSitePlus" id="Q4FZT8"/>
<dbReference type="jPOST" id="Q4FZT8"/>
<dbReference type="PaxDb" id="10116-ENSRNOP00000004173"/>
<dbReference type="Ensembl" id="ENSRNOT00000004173.5">
    <property type="protein sequence ID" value="ENSRNOP00000004173.2"/>
    <property type="gene ID" value="ENSRNOG00000003127.5"/>
</dbReference>
<dbReference type="GeneID" id="288772"/>
<dbReference type="KEGG" id="rno:288772"/>
<dbReference type="UCSC" id="RGD:1306649">
    <property type="organism name" value="rat"/>
</dbReference>
<dbReference type="AGR" id="RGD:1306649"/>
<dbReference type="CTD" id="283377"/>
<dbReference type="RGD" id="1306649">
    <property type="gene designation" value="Spryd4"/>
</dbReference>
<dbReference type="eggNOG" id="KOG2177">
    <property type="taxonomic scope" value="Eukaryota"/>
</dbReference>
<dbReference type="GeneTree" id="ENSGT00940000159780"/>
<dbReference type="HOGENOM" id="CLU_013137_11_0_1"/>
<dbReference type="InParanoid" id="Q4FZT8"/>
<dbReference type="OMA" id="WVFGYAQ"/>
<dbReference type="OrthoDB" id="5149at9989"/>
<dbReference type="PhylomeDB" id="Q4FZT8"/>
<dbReference type="TreeFam" id="TF317532"/>
<dbReference type="PRO" id="PR:Q4FZT8"/>
<dbReference type="Proteomes" id="UP000002494">
    <property type="component" value="Chromosome 7"/>
</dbReference>
<dbReference type="Bgee" id="ENSRNOG00000003127">
    <property type="expression patterns" value="Expressed in quadriceps femoris and 19 other cell types or tissues"/>
</dbReference>
<dbReference type="GO" id="GO:0005634">
    <property type="term" value="C:nucleus"/>
    <property type="evidence" value="ECO:0000250"/>
    <property type="project" value="UniProtKB"/>
</dbReference>
<dbReference type="FunFam" id="2.60.120.920:FF:000047">
    <property type="entry name" value="SPRY domain-containing protein 4"/>
    <property type="match status" value="1"/>
</dbReference>
<dbReference type="Gene3D" id="2.60.120.920">
    <property type="match status" value="1"/>
</dbReference>
<dbReference type="InterPro" id="IPR001870">
    <property type="entry name" value="B30.2/SPRY"/>
</dbReference>
<dbReference type="InterPro" id="IPR043136">
    <property type="entry name" value="B30.2/SPRY_sf"/>
</dbReference>
<dbReference type="InterPro" id="IPR003879">
    <property type="entry name" value="Butyrophylin_SPRY"/>
</dbReference>
<dbReference type="InterPro" id="IPR013320">
    <property type="entry name" value="ConA-like_dom_sf"/>
</dbReference>
<dbReference type="InterPro" id="IPR050617">
    <property type="entry name" value="E3_ligase_FN3/SPRY"/>
</dbReference>
<dbReference type="InterPro" id="IPR003877">
    <property type="entry name" value="SPRY_dom"/>
</dbReference>
<dbReference type="PANTHER" id="PTHR24099:SF16">
    <property type="entry name" value="E3 UBIQUITIN-PROTEIN LIGASE MIDLINE-1-LIKE ISOFORM X1"/>
    <property type="match status" value="1"/>
</dbReference>
<dbReference type="PANTHER" id="PTHR24099">
    <property type="entry name" value="E3 UBIQUITIN-PROTEIN LIGASE TRIM36-RELATED"/>
    <property type="match status" value="1"/>
</dbReference>
<dbReference type="Pfam" id="PF00622">
    <property type="entry name" value="SPRY"/>
    <property type="match status" value="1"/>
</dbReference>
<dbReference type="PRINTS" id="PR01407">
    <property type="entry name" value="BUTYPHLNCDUF"/>
</dbReference>
<dbReference type="SMART" id="SM00449">
    <property type="entry name" value="SPRY"/>
    <property type="match status" value="1"/>
</dbReference>
<dbReference type="SUPFAM" id="SSF49899">
    <property type="entry name" value="Concanavalin A-like lectins/glucanases"/>
    <property type="match status" value="1"/>
</dbReference>
<dbReference type="PROSITE" id="PS50188">
    <property type="entry name" value="B302_SPRY"/>
    <property type="match status" value="1"/>
</dbReference>
<feature type="chain" id="PRO_0000240858" description="SPRY domain-containing protein 4">
    <location>
        <begin position="1"/>
        <end position="207"/>
    </location>
</feature>
<feature type="domain" description="B30.2/SPRY" evidence="3">
    <location>
        <begin position="12"/>
        <end position="207"/>
    </location>
</feature>
<feature type="modified residue" description="N6-acetyllysine" evidence="2">
    <location>
        <position position="53"/>
    </location>
</feature>
<feature type="modified residue" description="N6-acetyllysine" evidence="1">
    <location>
        <position position="130"/>
    </location>
</feature>
<feature type="modified residue" description="N6-succinyllysine" evidence="2">
    <location>
        <position position="139"/>
    </location>
</feature>
<protein>
    <recommendedName>
        <fullName>SPRY domain-containing protein 4</fullName>
    </recommendedName>
</protein>